<keyword id="KW-0002">3D-structure</keyword>
<keyword id="KW-0025">Alternative splicing</keyword>
<keyword id="KW-0965">Cell junction</keyword>
<keyword id="KW-1003">Cell membrane</keyword>
<keyword id="KW-1015">Disulfide bond</keyword>
<keyword id="KW-0472">Membrane</keyword>
<keyword id="KW-1185">Reference proteome</keyword>
<keyword id="KW-0716">Sensory transduction</keyword>
<keyword id="KW-0796">Tight junction</keyword>
<keyword id="KW-0812">Transmembrane</keyword>
<keyword id="KW-1133">Transmembrane helix</keyword>
<keyword id="KW-0844">Vision</keyword>
<evidence type="ECO:0000250" key="1">
    <source>
        <dbReference type="UniProtKB" id="Q8N6F1"/>
    </source>
</evidence>
<evidence type="ECO:0000250" key="2">
    <source>
        <dbReference type="UniProtKB" id="Q91Y55"/>
    </source>
</evidence>
<evidence type="ECO:0000250" key="3">
    <source>
        <dbReference type="UniProtKB" id="Q925N4"/>
    </source>
</evidence>
<evidence type="ECO:0000250" key="4">
    <source>
        <dbReference type="UniProtKB" id="Q9Y5I7"/>
    </source>
</evidence>
<evidence type="ECO:0000255" key="5"/>
<evidence type="ECO:0000269" key="6">
    <source>
    </source>
</evidence>
<evidence type="ECO:0000269" key="7">
    <source>
    </source>
</evidence>
<evidence type="ECO:0000269" key="8">
    <source>
    </source>
</evidence>
<evidence type="ECO:0000269" key="9">
    <source>
    </source>
</evidence>
<evidence type="ECO:0000269" key="10">
    <source>
    </source>
</evidence>
<evidence type="ECO:0000303" key="11">
    <source>
    </source>
</evidence>
<evidence type="ECO:0000303" key="12">
    <source>
    </source>
</evidence>
<evidence type="ECO:0000305" key="13"/>
<evidence type="ECO:0000305" key="14">
    <source>
    </source>
</evidence>
<evidence type="ECO:0000312" key="15">
    <source>
        <dbReference type="MGI" id="MGI:3033992"/>
    </source>
</evidence>
<evidence type="ECO:0007744" key="16">
    <source>
        <dbReference type="PDB" id="3X29"/>
    </source>
</evidence>
<reference key="1">
    <citation type="submission" date="2003-10" db="EMBL/GenBank/DDBJ databases">
        <authorList>
            <person name="Luk J.M."/>
            <person name="Tong M.K."/>
            <person name="Mok B.W."/>
        </authorList>
    </citation>
    <scope>NUCLEOTIDE SEQUENCE [MRNA] (ISOFORM 1)</scope>
</reference>
<reference key="2">
    <citation type="journal article" date="2005" name="Science">
        <title>The transcriptional landscape of the mammalian genome.</title>
        <authorList>
            <person name="Carninci P."/>
            <person name="Kasukawa T."/>
            <person name="Katayama S."/>
            <person name="Gough J."/>
            <person name="Frith M.C."/>
            <person name="Maeda N."/>
            <person name="Oyama R."/>
            <person name="Ravasi T."/>
            <person name="Lenhard B."/>
            <person name="Wells C."/>
            <person name="Kodzius R."/>
            <person name="Shimokawa K."/>
            <person name="Bajic V.B."/>
            <person name="Brenner S.E."/>
            <person name="Batalov S."/>
            <person name="Forrest A.R."/>
            <person name="Zavolan M."/>
            <person name="Davis M.J."/>
            <person name="Wilming L.G."/>
            <person name="Aidinis V."/>
            <person name="Allen J.E."/>
            <person name="Ambesi-Impiombato A."/>
            <person name="Apweiler R."/>
            <person name="Aturaliya R.N."/>
            <person name="Bailey T.L."/>
            <person name="Bansal M."/>
            <person name="Baxter L."/>
            <person name="Beisel K.W."/>
            <person name="Bersano T."/>
            <person name="Bono H."/>
            <person name="Chalk A.M."/>
            <person name="Chiu K.P."/>
            <person name="Choudhary V."/>
            <person name="Christoffels A."/>
            <person name="Clutterbuck D.R."/>
            <person name="Crowe M.L."/>
            <person name="Dalla E."/>
            <person name="Dalrymple B.P."/>
            <person name="de Bono B."/>
            <person name="Della Gatta G."/>
            <person name="di Bernardo D."/>
            <person name="Down T."/>
            <person name="Engstrom P."/>
            <person name="Fagiolini M."/>
            <person name="Faulkner G."/>
            <person name="Fletcher C.F."/>
            <person name="Fukushima T."/>
            <person name="Furuno M."/>
            <person name="Futaki S."/>
            <person name="Gariboldi M."/>
            <person name="Georgii-Hemming P."/>
            <person name="Gingeras T.R."/>
            <person name="Gojobori T."/>
            <person name="Green R.E."/>
            <person name="Gustincich S."/>
            <person name="Harbers M."/>
            <person name="Hayashi Y."/>
            <person name="Hensch T.K."/>
            <person name="Hirokawa N."/>
            <person name="Hill D."/>
            <person name="Huminiecki L."/>
            <person name="Iacono M."/>
            <person name="Ikeo K."/>
            <person name="Iwama A."/>
            <person name="Ishikawa T."/>
            <person name="Jakt M."/>
            <person name="Kanapin A."/>
            <person name="Katoh M."/>
            <person name="Kawasawa Y."/>
            <person name="Kelso J."/>
            <person name="Kitamura H."/>
            <person name="Kitano H."/>
            <person name="Kollias G."/>
            <person name="Krishnan S.P."/>
            <person name="Kruger A."/>
            <person name="Kummerfeld S.K."/>
            <person name="Kurochkin I.V."/>
            <person name="Lareau L.F."/>
            <person name="Lazarevic D."/>
            <person name="Lipovich L."/>
            <person name="Liu J."/>
            <person name="Liuni S."/>
            <person name="McWilliam S."/>
            <person name="Madan Babu M."/>
            <person name="Madera M."/>
            <person name="Marchionni L."/>
            <person name="Matsuda H."/>
            <person name="Matsuzawa S."/>
            <person name="Miki H."/>
            <person name="Mignone F."/>
            <person name="Miyake S."/>
            <person name="Morris K."/>
            <person name="Mottagui-Tabar S."/>
            <person name="Mulder N."/>
            <person name="Nakano N."/>
            <person name="Nakauchi H."/>
            <person name="Ng P."/>
            <person name="Nilsson R."/>
            <person name="Nishiguchi S."/>
            <person name="Nishikawa S."/>
            <person name="Nori F."/>
            <person name="Ohara O."/>
            <person name="Okazaki Y."/>
            <person name="Orlando V."/>
            <person name="Pang K.C."/>
            <person name="Pavan W.J."/>
            <person name="Pavesi G."/>
            <person name="Pesole G."/>
            <person name="Petrovsky N."/>
            <person name="Piazza S."/>
            <person name="Reed J."/>
            <person name="Reid J.F."/>
            <person name="Ring B.Z."/>
            <person name="Ringwald M."/>
            <person name="Rost B."/>
            <person name="Ruan Y."/>
            <person name="Salzberg S.L."/>
            <person name="Sandelin A."/>
            <person name="Schneider C."/>
            <person name="Schoenbach C."/>
            <person name="Sekiguchi K."/>
            <person name="Semple C.A."/>
            <person name="Seno S."/>
            <person name="Sessa L."/>
            <person name="Sheng Y."/>
            <person name="Shibata Y."/>
            <person name="Shimada H."/>
            <person name="Shimada K."/>
            <person name="Silva D."/>
            <person name="Sinclair B."/>
            <person name="Sperling S."/>
            <person name="Stupka E."/>
            <person name="Sugiura K."/>
            <person name="Sultana R."/>
            <person name="Takenaka Y."/>
            <person name="Taki K."/>
            <person name="Tammoja K."/>
            <person name="Tan S.L."/>
            <person name="Tang S."/>
            <person name="Taylor M.S."/>
            <person name="Tegner J."/>
            <person name="Teichmann S.A."/>
            <person name="Ueda H.R."/>
            <person name="van Nimwegen E."/>
            <person name="Verardo R."/>
            <person name="Wei C.L."/>
            <person name="Yagi K."/>
            <person name="Yamanishi H."/>
            <person name="Zabarovsky E."/>
            <person name="Zhu S."/>
            <person name="Zimmer A."/>
            <person name="Hide W."/>
            <person name="Bult C."/>
            <person name="Grimmond S.M."/>
            <person name="Teasdale R.D."/>
            <person name="Liu E.T."/>
            <person name="Brusic V."/>
            <person name="Quackenbush J."/>
            <person name="Wahlestedt C."/>
            <person name="Mattick J.S."/>
            <person name="Hume D.A."/>
            <person name="Kai C."/>
            <person name="Sasaki D."/>
            <person name="Tomaru Y."/>
            <person name="Fukuda S."/>
            <person name="Kanamori-Katayama M."/>
            <person name="Suzuki M."/>
            <person name="Aoki J."/>
            <person name="Arakawa T."/>
            <person name="Iida J."/>
            <person name="Imamura K."/>
            <person name="Itoh M."/>
            <person name="Kato T."/>
            <person name="Kawaji H."/>
            <person name="Kawagashira N."/>
            <person name="Kawashima T."/>
            <person name="Kojima M."/>
            <person name="Kondo S."/>
            <person name="Konno H."/>
            <person name="Nakano K."/>
            <person name="Ninomiya N."/>
            <person name="Nishio T."/>
            <person name="Okada M."/>
            <person name="Plessy C."/>
            <person name="Shibata K."/>
            <person name="Shiraki T."/>
            <person name="Suzuki S."/>
            <person name="Tagami M."/>
            <person name="Waki K."/>
            <person name="Watahiki A."/>
            <person name="Okamura-Oho Y."/>
            <person name="Suzuki H."/>
            <person name="Kawai J."/>
            <person name="Hayashizaki Y."/>
        </authorList>
    </citation>
    <scope>NUCLEOTIDE SEQUENCE [LARGE SCALE MRNA] (ISOFORM 2)</scope>
    <source>
        <strain>C57BL/6J</strain>
    </source>
</reference>
<reference key="3">
    <citation type="submission" date="2000-03" db="EMBL/GenBank/DDBJ databases">
        <authorList>
            <person name="Kiuchi Y."/>
            <person name="Morita K."/>
            <person name="Furuse M."/>
            <person name="Tsukita S."/>
        </authorList>
    </citation>
    <scope>NUCLEOTIDE SEQUENCE [MRNA] OF 11-203</scope>
    <source>
        <strain>ICR</strain>
    </source>
</reference>
<reference key="4">
    <citation type="journal article" date="2005" name="J. Cell Biol.">
        <title>Tight junctions in Schwann cells of peripheral myelinated axons: a lesson from claudin-19-deficient mice.</title>
        <authorList>
            <person name="Miyamoto T."/>
            <person name="Morita K."/>
            <person name="Takemoto D."/>
            <person name="Takeuchi K."/>
            <person name="Kitano Y."/>
            <person name="Miyakawa T."/>
            <person name="Nakayama K."/>
            <person name="Okamura Y."/>
            <person name="Sasaki H."/>
            <person name="Miyachi Y."/>
            <person name="Furuse M."/>
            <person name="Tsukita S."/>
        </authorList>
    </citation>
    <scope>FUNCTION</scope>
    <scope>TISSUE SPECIFICITY</scope>
    <scope>DISRUPTION PHENOTYPE</scope>
</reference>
<reference key="5">
    <citation type="journal article" date="2009" name="Proc. Natl. Acad. Sci. U.S.A.">
        <title>Claudin-16 and claudin-19 interaction is required for their assembly into tight junctions and for renal reabsorption of magnesium.</title>
        <authorList>
            <person name="Hou J."/>
            <person name="Renigunta A."/>
            <person name="Gomes A.S."/>
            <person name="Hou M."/>
            <person name="Paul D.L."/>
            <person name="Waldegger S."/>
            <person name="Goodenough D.A."/>
        </authorList>
    </citation>
    <scope>FUNCTION</scope>
    <scope>TRANSPORTER ACTIVITY</scope>
    <scope>TISSUE SPECIFICITY</scope>
</reference>
<reference key="6">
    <citation type="journal article" date="2010" name="Cell">
        <title>A tissue-specific atlas of mouse protein phosphorylation and expression.</title>
        <authorList>
            <person name="Huttlin E.L."/>
            <person name="Jedrychowski M.P."/>
            <person name="Elias J.E."/>
            <person name="Goswami T."/>
            <person name="Rad R."/>
            <person name="Beausoleil S.A."/>
            <person name="Villen J."/>
            <person name="Haas W."/>
            <person name="Sowa M.E."/>
            <person name="Gygi S.P."/>
        </authorList>
    </citation>
    <scope>IDENTIFICATION BY MASS SPECTROMETRY [LARGE SCALE ANALYSIS]</scope>
    <source>
        <tissue>Kidney</tissue>
    </source>
</reference>
<reference key="7">
    <citation type="journal article" date="2017" name="Proc. Natl. Acad. Sci. U.S.A.">
        <title>Mosaic expression of claudins in thick ascending limbs of Henle results in spatial separation of paracellular Na+ and Mg2+ transport.</title>
        <authorList>
            <person name="Milatz S."/>
            <person name="Himmerkus N."/>
            <person name="Wulfmeyer V.C."/>
            <person name="Drewell H."/>
            <person name="Mutig K."/>
            <person name="Hou J."/>
            <person name="Breiderhoff T."/>
            <person name="Mueller D."/>
            <person name="Fromm M."/>
            <person name="Bleich M."/>
            <person name="Guenzel D."/>
        </authorList>
    </citation>
    <scope>FUNCTION</scope>
    <scope>SUBCELLULAR LOCATION</scope>
    <scope>TISSUE SPECIFICITY</scope>
</reference>
<reference key="8">
    <citation type="journal article" date="2019" name="Commun. Biol.">
        <title>Disease-associated mutations of claudin-19 disrupt retinal neurogenesis and visual function.</title>
        <authorList>
            <person name="Wang S.B."/>
            <person name="Xu T."/>
            <person name="Peng S."/>
            <person name="Singh D."/>
            <person name="Ghiassi-Nejad M."/>
            <person name="Adelman R.A."/>
            <person name="Rizzolo L.J."/>
        </authorList>
    </citation>
    <scope>FUNCTION</scope>
    <scope>DEVELOPMENTAL STAGE</scope>
</reference>
<reference evidence="16" key="9">
    <citation type="journal article" date="2015" name="Science">
        <title>Tight junctions. Structural insight into tight junction disassembly by Clostridium perfringens enterotoxin.</title>
        <authorList>
            <person name="Saitoh Y."/>
            <person name="Suzuki H."/>
            <person name="Tani K."/>
            <person name="Nishikawa K."/>
            <person name="Irie K."/>
            <person name="Ogura Y."/>
            <person name="Tamura A."/>
            <person name="Tsukita S."/>
            <person name="Fujiyoshi Y."/>
        </authorList>
    </citation>
    <scope>X-RAY CRYSTALLOGRAPHY (3.70 ANGSTROMS) OF 1-185 IN COMPLEX WITH CLOSTRIDIUM PERFRINGENS CPE</scope>
    <scope>INTERACTION WITH CLOSTRIDIUM PERFRINGENS CPE</scope>
    <scope>SUBCELLULAR LOCATION</scope>
    <scope>MUTAGENESIS OF TYR-35; ASP-38; ALA-39; ILE-40; ILE-41; THR-42; SER-53; GLN-146; GLU-147; ASN-150; PRO-151; SER-152; THR-153; PRO-154; VAL-155; ASN-156 AND TYR-159</scope>
    <scope>DISULFIDE BOND</scope>
</reference>
<organism>
    <name type="scientific">Mus musculus</name>
    <name type="common">Mouse</name>
    <dbReference type="NCBI Taxonomy" id="10090"/>
    <lineage>
        <taxon>Eukaryota</taxon>
        <taxon>Metazoa</taxon>
        <taxon>Chordata</taxon>
        <taxon>Craniata</taxon>
        <taxon>Vertebrata</taxon>
        <taxon>Euteleostomi</taxon>
        <taxon>Mammalia</taxon>
        <taxon>Eutheria</taxon>
        <taxon>Euarchontoglires</taxon>
        <taxon>Glires</taxon>
        <taxon>Rodentia</taxon>
        <taxon>Myomorpha</taxon>
        <taxon>Muroidea</taxon>
        <taxon>Muridae</taxon>
        <taxon>Murinae</taxon>
        <taxon>Mus</taxon>
        <taxon>Mus</taxon>
    </lineage>
</organism>
<name>CLD19_MOUSE</name>
<comment type="function">
    <text evidence="1 6 7 9 10">Forms paracellular channels: coassembles with CLDN16 into tight junction strands with cation-selective channels through the strands, conveying epithelial permeability in a process known as paracellular tight junction permeability (By similarity) (PubMed:19706394). Involved in the maintenance of ion gradients along the nephron. In the thick ascending limb (TAL) of Henle's loop, facilitates sodium paracellular permeability from the interstitial compartment to the lumen, contributing to the lumen-positive transepithelial potential that drives paracellular magnesium and calcium reabsorption (PubMed:28028216). Forms paracellular barriers on its own. In the peripheral nervous system, represents a major constituent of the tight junctions in Schwann cells and contributes to electrical sealing. During retinal neurogenesis, may regulate the barrier properties of tight junctions in retinal pigment epithelium, required for proper retinal tissue differentiation and vision (PubMed:15883201, PubMed:30937396).</text>
</comment>
<comment type="catalytic activity">
    <reaction evidence="1 14">
        <text>Mg(2+)(in) = Mg(2+)(out)</text>
        <dbReference type="Rhea" id="RHEA:29827"/>
        <dbReference type="ChEBI" id="CHEBI:18420"/>
    </reaction>
</comment>
<comment type="catalytic activity">
    <reaction evidence="3 14">
        <text>Ca(2+)(in) = Ca(2+)(out)</text>
        <dbReference type="Rhea" id="RHEA:29671"/>
        <dbReference type="ChEBI" id="CHEBI:29108"/>
    </reaction>
</comment>
<comment type="catalytic activity">
    <reaction evidence="1 14">
        <text>Na(+)(in) = Na(+)(out)</text>
        <dbReference type="Rhea" id="RHEA:34963"/>
        <dbReference type="ChEBI" id="CHEBI:29101"/>
    </reaction>
</comment>
<comment type="catalytic activity">
    <reaction evidence="4 14">
        <text>K(+)(in) = K(+)(out)</text>
        <dbReference type="Rhea" id="RHEA:29463"/>
        <dbReference type="ChEBI" id="CHEBI:29103"/>
    </reaction>
</comment>
<comment type="catalytic activity">
    <reaction evidence="4">
        <text>Rb(+)(in) = Rb(+)(out)</text>
        <dbReference type="Rhea" id="RHEA:78547"/>
        <dbReference type="ChEBI" id="CHEBI:49847"/>
    </reaction>
</comment>
<comment type="catalytic activity">
    <reaction evidence="4">
        <text>Cs(+)(in) = Cs(+)(out)</text>
        <dbReference type="Rhea" id="RHEA:78555"/>
        <dbReference type="ChEBI" id="CHEBI:49547"/>
    </reaction>
</comment>
<comment type="catalytic activity">
    <reaction evidence="3">
        <text>Li(+)(in) = Li(+)(out)</text>
        <dbReference type="Rhea" id="RHEA:78551"/>
        <dbReference type="ChEBI" id="CHEBI:49713"/>
    </reaction>
</comment>
<comment type="subunit">
    <text evidence="1 2 4">Can form homo- and heteropolymeric tight junction strands. Interacts with other claudins including CLDN3, CLDN10, CLDN16 and CLDN18 with highest affinity for CLDN16 (By similarity). Interacts (via PDZ-binding motif TRV) with TJP1 (via PDZ domain) (By similarity).</text>
</comment>
<comment type="subunit">
    <text evidence="8">(Microbial infection) Interacts (via both extracellular domains) with Clostridium perfringens enterotoxin CPE; the interaction disrupts claudin assembly in tight junctions.</text>
</comment>
<comment type="interaction">
    <interactant intactId="EBI-8036280">
        <id>Q9ET38</id>
    </interactant>
    <interactant intactId="EBI-16142958">
        <id>P01558</id>
        <label>cpe</label>
    </interactant>
    <organismsDiffer>true</organismsDiffer>
    <experiments>2</experiments>
</comment>
<comment type="subcellular location">
    <subcellularLocation>
        <location evidence="8 9">Cell junction</location>
        <location evidence="8 9">Tight junction</location>
    </subcellularLocation>
    <subcellularLocation>
        <location evidence="8">Cell membrane</location>
        <topology evidence="8">Multi-pass membrane protein</topology>
    </subcellularLocation>
    <text evidence="1 9">Cotrafficks with CLDN16 from ER to tight junctions. Colocalizes with CLDN16 and CLDN3 in cell-cell contact areas of the TAL spatially separated from CLDN10b paracellular channels.</text>
</comment>
<comment type="alternative products">
    <event type="alternative splicing"/>
    <isoform>
        <id>Q9ET38-1</id>
        <name>1</name>
        <sequence type="displayed"/>
    </isoform>
    <isoform>
        <id>Q9ET38-2</id>
        <name>2</name>
        <sequence type="described" ref="VSP_010343"/>
    </isoform>
</comment>
<comment type="tissue specificity">
    <text evidence="6 7 9">Expressed in the corticomedullary axis of the TAL, specifically in the cortex and the outer stripe of outer medulla (OSOM) zone (at protein level). Expressed in peripheral nervous system, in Schwan cells (at protein level).</text>
</comment>
<comment type="developmental stage">
    <text evidence="10">Expressed in retinal pigment epithelium (RPE) and developing neurosensory retina from postnatal days 0 (PN0). Enriched in retinal ganglion cells on PN3 (at protein level). The expression in the neurosensory retina decreases after PN14 and is undectable by PN30 (at protein level). Continues to be expressed in RPE through adulthood.</text>
</comment>
<comment type="disruption phenotype">
    <text evidence="6">Mice are born in normal Mendelian ratios. They develop peripheral neuropathy associated with defects in the electrical sealing by tight junctions in Schwann cells.</text>
</comment>
<comment type="similarity">
    <text evidence="13">Belongs to the claudin family.</text>
</comment>
<protein>
    <recommendedName>
        <fullName evidence="12">Claudin-19</fullName>
    </recommendedName>
</protein>
<accession>Q9ET38</accession>
<accession>Q8R4B7</accession>
<dbReference type="EMBL" id="AF486651">
    <property type="protein sequence ID" value="AAM12735.2"/>
    <property type="molecule type" value="mRNA"/>
</dbReference>
<dbReference type="EMBL" id="AK032743">
    <property type="protein sequence ID" value="BAC28005.1"/>
    <property type="molecule type" value="mRNA"/>
</dbReference>
<dbReference type="EMBL" id="AF249889">
    <property type="protein sequence ID" value="AAF98323.1"/>
    <property type="molecule type" value="mRNA"/>
</dbReference>
<dbReference type="CCDS" id="CCDS18577.1">
    <molecule id="Q9ET38-1"/>
</dbReference>
<dbReference type="CCDS" id="CCDS18578.1">
    <molecule id="Q9ET38-2"/>
</dbReference>
<dbReference type="RefSeq" id="NP_001033679.1">
    <molecule id="Q9ET38-1"/>
    <property type="nucleotide sequence ID" value="NM_001038590.1"/>
</dbReference>
<dbReference type="RefSeq" id="NP_694745.1">
    <molecule id="Q9ET38-2"/>
    <property type="nucleotide sequence ID" value="NM_153105.7"/>
</dbReference>
<dbReference type="PDB" id="3X29">
    <property type="method" value="X-ray"/>
    <property type="resolution" value="3.70 A"/>
    <property type="chains" value="A/C=1-185"/>
</dbReference>
<dbReference type="PDBsum" id="3X29"/>
<dbReference type="SMR" id="Q9ET38"/>
<dbReference type="DIP" id="DIP-42881N"/>
<dbReference type="FunCoup" id="Q9ET38">
    <property type="interactions" value="321"/>
</dbReference>
<dbReference type="IntAct" id="Q9ET38">
    <property type="interactions" value="2"/>
</dbReference>
<dbReference type="MINT" id="Q9ET38"/>
<dbReference type="STRING" id="10090.ENSMUSP00000081334"/>
<dbReference type="PhosphoSitePlus" id="Q9ET38"/>
<dbReference type="PaxDb" id="10090-ENSMUSP00000081334"/>
<dbReference type="ProteomicsDB" id="285486">
    <molecule id="Q9ET38-1"/>
</dbReference>
<dbReference type="ProteomicsDB" id="285487">
    <molecule id="Q9ET38-2"/>
</dbReference>
<dbReference type="Antibodypedia" id="32237">
    <property type="antibodies" value="156 antibodies from 26 providers"/>
</dbReference>
<dbReference type="DNASU" id="242653"/>
<dbReference type="Ensembl" id="ENSMUST00000084309.12">
    <molecule id="Q9ET38-1"/>
    <property type="protein sequence ID" value="ENSMUSP00000081334.6"/>
    <property type="gene ID" value="ENSMUSG00000066058.12"/>
</dbReference>
<dbReference type="Ensembl" id="ENSMUST00000094823.4">
    <molecule id="Q9ET38-2"/>
    <property type="protein sequence ID" value="ENSMUSP00000092418.4"/>
    <property type="gene ID" value="ENSMUSG00000066058.12"/>
</dbReference>
<dbReference type="GeneID" id="242653"/>
<dbReference type="KEGG" id="mmu:242653"/>
<dbReference type="UCSC" id="uc008uls.1">
    <molecule id="Q9ET38-1"/>
    <property type="organism name" value="mouse"/>
</dbReference>
<dbReference type="AGR" id="MGI:3033992"/>
<dbReference type="CTD" id="149461"/>
<dbReference type="MGI" id="MGI:3033992">
    <property type="gene designation" value="Cldn19"/>
</dbReference>
<dbReference type="VEuPathDB" id="HostDB:ENSMUSG00000066058"/>
<dbReference type="eggNOG" id="ENOG502QTG5">
    <property type="taxonomic scope" value="Eukaryota"/>
</dbReference>
<dbReference type="GeneTree" id="ENSGT00940000158624"/>
<dbReference type="HOGENOM" id="CLU_076370_2_0_1"/>
<dbReference type="InParanoid" id="Q9ET38"/>
<dbReference type="OMA" id="KRGNQCV"/>
<dbReference type="OrthoDB" id="10025519at2759"/>
<dbReference type="PhylomeDB" id="Q9ET38"/>
<dbReference type="TreeFam" id="TF331936"/>
<dbReference type="BioGRID-ORCS" id="242653">
    <property type="hits" value="1 hit in 78 CRISPR screens"/>
</dbReference>
<dbReference type="EvolutionaryTrace" id="Q9ET38"/>
<dbReference type="PRO" id="PR:Q9ET38"/>
<dbReference type="Proteomes" id="UP000000589">
    <property type="component" value="Chromosome 4"/>
</dbReference>
<dbReference type="RNAct" id="Q9ET38">
    <property type="molecule type" value="protein"/>
</dbReference>
<dbReference type="Bgee" id="ENSMUSG00000066058">
    <property type="expression patterns" value="Expressed in sciatic nerve and 32 other cell types or tissues"/>
</dbReference>
<dbReference type="ExpressionAtlas" id="Q9ET38">
    <property type="expression patterns" value="baseline and differential"/>
</dbReference>
<dbReference type="GO" id="GO:0043296">
    <property type="term" value="C:apical junction complex"/>
    <property type="evidence" value="ECO:0000266"/>
    <property type="project" value="MGI"/>
</dbReference>
<dbReference type="GO" id="GO:0016323">
    <property type="term" value="C:basolateral plasma membrane"/>
    <property type="evidence" value="ECO:0000266"/>
    <property type="project" value="MGI"/>
</dbReference>
<dbReference type="GO" id="GO:0005923">
    <property type="term" value="C:bicellular tight junction"/>
    <property type="evidence" value="ECO:0000314"/>
    <property type="project" value="MGI"/>
</dbReference>
<dbReference type="GO" id="GO:0030054">
    <property type="term" value="C:cell junction"/>
    <property type="evidence" value="ECO:0000314"/>
    <property type="project" value="MGI"/>
</dbReference>
<dbReference type="GO" id="GO:0005737">
    <property type="term" value="C:cytoplasm"/>
    <property type="evidence" value="ECO:0000314"/>
    <property type="project" value="MGI"/>
</dbReference>
<dbReference type="GO" id="GO:0097453">
    <property type="term" value="C:mesaxon"/>
    <property type="evidence" value="ECO:0000314"/>
    <property type="project" value="UniProtKB"/>
</dbReference>
<dbReference type="GO" id="GO:0005634">
    <property type="term" value="C:nucleus"/>
    <property type="evidence" value="ECO:0000314"/>
    <property type="project" value="MGI"/>
</dbReference>
<dbReference type="GO" id="GO:0033010">
    <property type="term" value="C:paranodal junction"/>
    <property type="evidence" value="ECO:0000314"/>
    <property type="project" value="UniProtKB"/>
</dbReference>
<dbReference type="GO" id="GO:0048471">
    <property type="term" value="C:perinuclear region of cytoplasm"/>
    <property type="evidence" value="ECO:0007669"/>
    <property type="project" value="Ensembl"/>
</dbReference>
<dbReference type="GO" id="GO:0005886">
    <property type="term" value="C:plasma membrane"/>
    <property type="evidence" value="ECO:0000314"/>
    <property type="project" value="UniProtKB"/>
</dbReference>
<dbReference type="GO" id="GO:0043220">
    <property type="term" value="C:Schmidt-Lanterman incisure"/>
    <property type="evidence" value="ECO:0000314"/>
    <property type="project" value="UniProtKB"/>
</dbReference>
<dbReference type="GO" id="GO:0098632">
    <property type="term" value="F:cell-cell adhesion mediator activity"/>
    <property type="evidence" value="ECO:0007669"/>
    <property type="project" value="Ensembl"/>
</dbReference>
<dbReference type="GO" id="GO:0042802">
    <property type="term" value="F:identical protein binding"/>
    <property type="evidence" value="ECO:0000250"/>
    <property type="project" value="UniProtKB"/>
</dbReference>
<dbReference type="GO" id="GO:0160187">
    <property type="term" value="F:paracellular tight junction channel activity"/>
    <property type="evidence" value="ECO:0000250"/>
    <property type="project" value="UniProtKB"/>
</dbReference>
<dbReference type="GO" id="GO:0005198">
    <property type="term" value="F:structural molecule activity"/>
    <property type="evidence" value="ECO:0007669"/>
    <property type="project" value="InterPro"/>
</dbReference>
<dbReference type="GO" id="GO:0030036">
    <property type="term" value="P:actin cytoskeleton organization"/>
    <property type="evidence" value="ECO:0007669"/>
    <property type="project" value="Ensembl"/>
</dbReference>
<dbReference type="GO" id="GO:0043297">
    <property type="term" value="P:apical junction assembly"/>
    <property type="evidence" value="ECO:0000315"/>
    <property type="project" value="MGI"/>
</dbReference>
<dbReference type="GO" id="GO:0016338">
    <property type="term" value="P:calcium-independent cell-cell adhesion via plasma membrane cell-adhesion molecules"/>
    <property type="evidence" value="ECO:0000250"/>
    <property type="project" value="UniProtKB"/>
</dbReference>
<dbReference type="GO" id="GO:0030336">
    <property type="term" value="P:negative regulation of cell migration"/>
    <property type="evidence" value="ECO:0007669"/>
    <property type="project" value="Ensembl"/>
</dbReference>
<dbReference type="GO" id="GO:0008285">
    <property type="term" value="P:negative regulation of cell population proliferation"/>
    <property type="evidence" value="ECO:0007669"/>
    <property type="project" value="Ensembl"/>
</dbReference>
<dbReference type="GO" id="GO:0010629">
    <property type="term" value="P:negative regulation of gene expression"/>
    <property type="evidence" value="ECO:0007669"/>
    <property type="project" value="Ensembl"/>
</dbReference>
<dbReference type="GO" id="GO:0019227">
    <property type="term" value="P:neuronal action potential propagation"/>
    <property type="evidence" value="ECO:0000315"/>
    <property type="project" value="MGI"/>
</dbReference>
<dbReference type="GO" id="GO:0160184">
    <property type="term" value="P:paracellular transport"/>
    <property type="evidence" value="ECO:0000250"/>
    <property type="project" value="UniProtKB"/>
</dbReference>
<dbReference type="GO" id="GO:0010628">
    <property type="term" value="P:positive regulation of gene expression"/>
    <property type="evidence" value="ECO:0007669"/>
    <property type="project" value="Ensembl"/>
</dbReference>
<dbReference type="GO" id="GO:0150111">
    <property type="term" value="P:regulation of transepithelial transport"/>
    <property type="evidence" value="ECO:0007669"/>
    <property type="project" value="Ensembl"/>
</dbReference>
<dbReference type="GO" id="GO:0070293">
    <property type="term" value="P:renal absorption"/>
    <property type="evidence" value="ECO:0000315"/>
    <property type="project" value="UniProtKB"/>
</dbReference>
<dbReference type="GO" id="GO:0003406">
    <property type="term" value="P:retinal pigment epithelium development"/>
    <property type="evidence" value="ECO:0000315"/>
    <property type="project" value="UniProtKB"/>
</dbReference>
<dbReference type="GO" id="GO:0120193">
    <property type="term" value="P:tight junction organization"/>
    <property type="evidence" value="ECO:0000315"/>
    <property type="project" value="MGI"/>
</dbReference>
<dbReference type="GO" id="GO:0007601">
    <property type="term" value="P:visual perception"/>
    <property type="evidence" value="ECO:0007669"/>
    <property type="project" value="UniProtKB-KW"/>
</dbReference>
<dbReference type="FunFam" id="1.20.140.150:FF:000001">
    <property type="entry name" value="Claudin"/>
    <property type="match status" value="1"/>
</dbReference>
<dbReference type="Gene3D" id="1.20.140.150">
    <property type="match status" value="1"/>
</dbReference>
<dbReference type="InterPro" id="IPR006187">
    <property type="entry name" value="Claudin"/>
</dbReference>
<dbReference type="InterPro" id="IPR017974">
    <property type="entry name" value="Claudin_CS"/>
</dbReference>
<dbReference type="InterPro" id="IPR004031">
    <property type="entry name" value="PMP22/EMP/MP20/Claudin"/>
</dbReference>
<dbReference type="PANTHER" id="PTHR12002">
    <property type="entry name" value="CLAUDIN"/>
    <property type="match status" value="1"/>
</dbReference>
<dbReference type="Pfam" id="PF00822">
    <property type="entry name" value="PMP22_Claudin"/>
    <property type="match status" value="1"/>
</dbReference>
<dbReference type="PRINTS" id="PR01077">
    <property type="entry name" value="CLAUDIN"/>
</dbReference>
<dbReference type="PROSITE" id="PS01346">
    <property type="entry name" value="CLAUDIN"/>
    <property type="match status" value="1"/>
</dbReference>
<proteinExistence type="evidence at protein level"/>
<feature type="chain" id="PRO_0000144782" description="Claudin-19">
    <location>
        <begin position="1"/>
        <end position="224"/>
    </location>
</feature>
<feature type="topological domain" description="Cytoplasmic" evidence="5">
    <location>
        <begin position="1"/>
        <end position="7"/>
    </location>
</feature>
<feature type="transmembrane region" description="Helical" evidence="5">
    <location>
        <begin position="8"/>
        <end position="28"/>
    </location>
</feature>
<feature type="topological domain" description="Extracellular" evidence="5">
    <location>
        <begin position="29"/>
        <end position="81"/>
    </location>
</feature>
<feature type="transmembrane region" description="Helical" evidence="5">
    <location>
        <begin position="82"/>
        <end position="102"/>
    </location>
</feature>
<feature type="topological domain" description="Cytoplasmic" evidence="5">
    <location>
        <begin position="103"/>
        <end position="117"/>
    </location>
</feature>
<feature type="transmembrane region" description="Helical" evidence="5">
    <location>
        <begin position="118"/>
        <end position="138"/>
    </location>
</feature>
<feature type="topological domain" description="Extracellular" evidence="5">
    <location>
        <begin position="139"/>
        <end position="160"/>
    </location>
</feature>
<feature type="transmembrane region" description="Helical" evidence="5">
    <location>
        <begin position="161"/>
        <end position="181"/>
    </location>
</feature>
<feature type="topological domain" description="Cytoplasmic" evidence="5">
    <location>
        <begin position="182"/>
        <end position="224"/>
    </location>
</feature>
<feature type="disulfide bond" evidence="8 16">
    <location>
        <begin position="54"/>
        <end position="64"/>
    </location>
</feature>
<feature type="splice variant" id="VSP_010343" description="In isoform 2." evidence="11">
    <original>PVVKLPASVKGPLGV</original>
    <variation>YV</variation>
    <location>
        <begin position="210"/>
        <end position="224"/>
    </location>
</feature>
<feature type="mutagenesis site" description="No effect on interaction with Clostridium perfringens CPE." evidence="8">
    <original>Y</original>
    <variation>F</variation>
    <location>
        <position position="35"/>
    </location>
</feature>
<feature type="mutagenesis site" description="Abolishes interaction with Clostridium perfringens CPE." evidence="8">
    <original>Y</original>
    <variation>S</variation>
    <location>
        <position position="35"/>
    </location>
</feature>
<feature type="mutagenesis site" description="No effect on interaction with Clostridium perfringens CPE." evidence="8">
    <original>D</original>
    <variation>A</variation>
    <location>
        <position position="38"/>
    </location>
</feature>
<feature type="mutagenesis site" description="Abolishes interaction with Clostridium perfringens CPE." evidence="8">
    <original>A</original>
    <variation>R</variation>
    <location>
        <position position="39"/>
    </location>
</feature>
<feature type="mutagenesis site" description="Strongly reduces interaction with Clostridium perfringens CPE." evidence="8">
    <original>A</original>
    <variation>S</variation>
    <location>
        <position position="39"/>
    </location>
</feature>
<feature type="mutagenesis site" description="Abolishes interaction with Clostridium perfringens CPE." evidence="8">
    <original>I</original>
    <variation>A</variation>
    <variation>S</variation>
    <variation>L</variation>
    <location>
        <position position="40"/>
    </location>
</feature>
<feature type="mutagenesis site" description="Strongly reduces interaction with Clostridium perfringens CPE." evidence="8">
    <original>I</original>
    <variation>V</variation>
    <location>
        <position position="40"/>
    </location>
</feature>
<feature type="mutagenesis site" description="Abolishes interaction with Clostridium perfringens CPE." evidence="8">
    <original>I</original>
    <variation>A</variation>
    <variation>S</variation>
    <variation>V</variation>
    <location>
        <position position="41"/>
    </location>
</feature>
<feature type="mutagenesis site" description="No effect on interaction with Clostridium perfringens CPE." evidence="8">
    <original>I</original>
    <variation>L</variation>
    <location>
        <position position="41"/>
    </location>
</feature>
<feature type="mutagenesis site" description="No effect on interaction with Clostridium perfringens CPE." evidence="8">
    <original>T</original>
    <variation>A</variation>
    <variation>V</variation>
    <location>
        <position position="42"/>
    </location>
</feature>
<feature type="mutagenesis site" description="No effect on interaction with Clostridium perfringens CPE." evidence="8">
    <original>S</original>
    <variation>A</variation>
    <location>
        <position position="53"/>
    </location>
</feature>
<feature type="mutagenesis site" description="No effect on interaction with Clostridium perfringens CPE." evidence="8">
    <original>Q</original>
    <variation>A</variation>
    <location>
        <position position="146"/>
    </location>
</feature>
<feature type="mutagenesis site" description="No effect on interaction with Clostridium perfringens CPE." evidence="8">
    <original>E</original>
    <variation>A</variation>
    <variation>Q</variation>
    <variation>R</variation>
    <location>
        <position position="147"/>
    </location>
</feature>
<feature type="mutagenesis site" description="Abolishes interaction with Clostridium perfringens CPE." evidence="8">
    <original>N</original>
    <variation>A</variation>
    <variation>D</variation>
    <variation>Q</variation>
    <variation>K</variation>
    <location>
        <position position="150"/>
    </location>
</feature>
<feature type="mutagenesis site" description="Strongly inhibits interaction with Clostridium perfringens CPE." evidence="8">
    <original>N</original>
    <variation>S</variation>
    <variation>L</variation>
    <location>
        <position position="150"/>
    </location>
</feature>
<feature type="mutagenesis site" description="Abolishes interaction with Clostridium perfringens CPE." evidence="8">
    <original>P</original>
    <variation>A</variation>
    <variation>G</variation>
    <location>
        <position position="151"/>
    </location>
</feature>
<feature type="mutagenesis site" description="Abolishes interaction with Clostridium perfringens CPE." evidence="8">
    <original>S</original>
    <variation>D</variation>
    <location>
        <position position="152"/>
    </location>
</feature>
<feature type="mutagenesis site" description="No effect on interaction with Clostridium perfringens CPE." evidence="8">
    <original>S</original>
    <variation>L</variation>
    <variation>M</variation>
    <variation>F</variation>
    <location>
        <position position="152"/>
    </location>
</feature>
<feature type="mutagenesis site" description="No effect on interaction with Clostridium perfringens CPE." evidence="8">
    <original>T</original>
    <variation>V</variation>
    <variation>L</variation>
    <location>
        <position position="153"/>
    </location>
</feature>
<feature type="mutagenesis site" description="Abolishes interaction with Clostridium perfringens CPE." evidence="8">
    <original>T</original>
    <variation>Y</variation>
    <location>
        <position position="153"/>
    </location>
</feature>
<feature type="mutagenesis site" description="Strongly inhibits interaction with Clostridium perfringens CPE." evidence="8">
    <original>P</original>
    <variation>A</variation>
    <location>
        <position position="154"/>
    </location>
</feature>
<feature type="mutagenesis site" description="Abolishes interaction with Clostridium perfringens CPE." evidence="8">
    <original>P</original>
    <variation>D</variation>
    <location>
        <position position="154"/>
    </location>
</feature>
<feature type="mutagenesis site" description="No effect on interaction with Clostridium perfringens CPE." evidence="8">
    <original>V</original>
    <variation>I</variation>
    <location>
        <position position="155"/>
    </location>
</feature>
<feature type="mutagenesis site" description="No effect on interaction with Clostridium perfringens CPE." evidence="8">
    <original>N</original>
    <variation>A</variation>
    <variation>S</variation>
    <location>
        <position position="156"/>
    </location>
</feature>
<feature type="mutagenesis site" description="Strongly inhibits interaction with Clostridium perfringens CPE." evidence="8">
    <original>N</original>
    <variation>G</variation>
    <location>
        <position position="156"/>
    </location>
</feature>
<feature type="mutagenesis site" description="Strongly inhibits interaction with Clostridium perfringens CPE." evidence="8">
    <original>Y</original>
    <variation>S</variation>
    <variation>F</variation>
    <location>
        <position position="159"/>
    </location>
</feature>
<sequence>MANSGLQLLGYFLALGGWVGIIASTALPQWKQSSYAGDAIITAVGLYEGLWMSCASQSTGQVQCKLYDSLLALDGHIQSARALMVVAVLLGFVAMVLSVVGMKCTRVGDSNPTAKSRVAISGGALFLLAGLCTLTAVSWYATLVTQEFFNPSTPVNARYEFGPALFVGWASAGLAMLGGSFLCCTCPEPERANSIPQPYRSGPSTAAREPVVKLPASVKGPLGV</sequence>
<gene>
    <name evidence="12 15" type="primary">Cldn19</name>
</gene>